<reference key="1">
    <citation type="journal article" date="2009" name="Environ. Microbiol.">
        <title>The genome of Polaromonas naphthalenivorans strain CJ2, isolated from coal tar-contaminated sediment, reveals physiological and metabolic versatility and evolution through extensive horizontal gene transfer.</title>
        <authorList>
            <person name="Yagi J.M."/>
            <person name="Sims D."/>
            <person name="Brettin T."/>
            <person name="Bruce D."/>
            <person name="Madsen E.L."/>
        </authorList>
    </citation>
    <scope>NUCLEOTIDE SEQUENCE [LARGE SCALE GENOMIC DNA]</scope>
    <source>
        <strain>CJ2</strain>
    </source>
</reference>
<protein>
    <recommendedName>
        <fullName evidence="1">ATP synthase subunit beta 1</fullName>
        <ecNumber evidence="1">7.1.2.2</ecNumber>
    </recommendedName>
    <alternativeName>
        <fullName evidence="1">ATP synthase F1 sector subunit beta 1</fullName>
    </alternativeName>
    <alternativeName>
        <fullName evidence="1">F-ATPase subunit beta 1</fullName>
    </alternativeName>
</protein>
<comment type="function">
    <text evidence="1">Produces ATP from ADP in the presence of a proton gradient across the membrane. The catalytic sites are hosted primarily by the beta subunits.</text>
</comment>
<comment type="catalytic activity">
    <reaction evidence="1">
        <text>ATP + H2O + 4 H(+)(in) = ADP + phosphate + 5 H(+)(out)</text>
        <dbReference type="Rhea" id="RHEA:57720"/>
        <dbReference type="ChEBI" id="CHEBI:15377"/>
        <dbReference type="ChEBI" id="CHEBI:15378"/>
        <dbReference type="ChEBI" id="CHEBI:30616"/>
        <dbReference type="ChEBI" id="CHEBI:43474"/>
        <dbReference type="ChEBI" id="CHEBI:456216"/>
        <dbReference type="EC" id="7.1.2.2"/>
    </reaction>
</comment>
<comment type="subunit">
    <text evidence="1">F-type ATPases have 2 components, CF(1) - the catalytic core - and CF(0) - the membrane proton channel. CF(1) has five subunits: alpha(3), beta(3), gamma(1), delta(1), epsilon(1). CF(0) has three main subunits: a(1), b(2) and c(9-12). The alpha and beta chains form an alternating ring which encloses part of the gamma chain. CF(1) is attached to CF(0) by a central stalk formed by the gamma and epsilon chains, while a peripheral stalk is formed by the delta and b chains.</text>
</comment>
<comment type="subcellular location">
    <subcellularLocation>
        <location evidence="1">Cell inner membrane</location>
        <topology evidence="1">Peripheral membrane protein</topology>
    </subcellularLocation>
</comment>
<comment type="similarity">
    <text evidence="1">Belongs to the ATPase alpha/beta chains family.</text>
</comment>
<dbReference type="EC" id="7.1.2.2" evidence="1"/>
<dbReference type="EMBL" id="CP000529">
    <property type="protein sequence ID" value="ABM35580.1"/>
    <property type="molecule type" value="Genomic_DNA"/>
</dbReference>
<dbReference type="RefSeq" id="WP_011799688.1">
    <property type="nucleotide sequence ID" value="NC_008781.1"/>
</dbReference>
<dbReference type="SMR" id="A1VIV2"/>
<dbReference type="STRING" id="365044.Pnap_0255"/>
<dbReference type="KEGG" id="pna:Pnap_0255"/>
<dbReference type="eggNOG" id="COG0055">
    <property type="taxonomic scope" value="Bacteria"/>
</dbReference>
<dbReference type="HOGENOM" id="CLU_022398_0_2_4"/>
<dbReference type="OrthoDB" id="9801639at2"/>
<dbReference type="Proteomes" id="UP000000644">
    <property type="component" value="Chromosome"/>
</dbReference>
<dbReference type="GO" id="GO:0005886">
    <property type="term" value="C:plasma membrane"/>
    <property type="evidence" value="ECO:0007669"/>
    <property type="project" value="UniProtKB-SubCell"/>
</dbReference>
<dbReference type="GO" id="GO:0045259">
    <property type="term" value="C:proton-transporting ATP synthase complex"/>
    <property type="evidence" value="ECO:0007669"/>
    <property type="project" value="UniProtKB-KW"/>
</dbReference>
<dbReference type="GO" id="GO:0005524">
    <property type="term" value="F:ATP binding"/>
    <property type="evidence" value="ECO:0007669"/>
    <property type="project" value="UniProtKB-UniRule"/>
</dbReference>
<dbReference type="GO" id="GO:0016887">
    <property type="term" value="F:ATP hydrolysis activity"/>
    <property type="evidence" value="ECO:0007669"/>
    <property type="project" value="InterPro"/>
</dbReference>
<dbReference type="GO" id="GO:0046933">
    <property type="term" value="F:proton-transporting ATP synthase activity, rotational mechanism"/>
    <property type="evidence" value="ECO:0007669"/>
    <property type="project" value="UniProtKB-UniRule"/>
</dbReference>
<dbReference type="CDD" id="cd18110">
    <property type="entry name" value="ATP-synt_F1_beta_C"/>
    <property type="match status" value="1"/>
</dbReference>
<dbReference type="CDD" id="cd18115">
    <property type="entry name" value="ATP-synt_F1_beta_N"/>
    <property type="match status" value="1"/>
</dbReference>
<dbReference type="CDD" id="cd01133">
    <property type="entry name" value="F1-ATPase_beta_CD"/>
    <property type="match status" value="1"/>
</dbReference>
<dbReference type="FunFam" id="1.10.1140.10:FF:000001">
    <property type="entry name" value="ATP synthase subunit beta"/>
    <property type="match status" value="1"/>
</dbReference>
<dbReference type="FunFam" id="3.40.50.300:FF:000004">
    <property type="entry name" value="ATP synthase subunit beta"/>
    <property type="match status" value="1"/>
</dbReference>
<dbReference type="Gene3D" id="2.40.10.170">
    <property type="match status" value="1"/>
</dbReference>
<dbReference type="Gene3D" id="1.10.1140.10">
    <property type="entry name" value="Bovine Mitochondrial F1-atpase, Atp Synthase Beta Chain, Chain D, domain 3"/>
    <property type="match status" value="1"/>
</dbReference>
<dbReference type="Gene3D" id="3.40.50.300">
    <property type="entry name" value="P-loop containing nucleotide triphosphate hydrolases"/>
    <property type="match status" value="1"/>
</dbReference>
<dbReference type="HAMAP" id="MF_01347">
    <property type="entry name" value="ATP_synth_beta_bact"/>
    <property type="match status" value="1"/>
</dbReference>
<dbReference type="InterPro" id="IPR003593">
    <property type="entry name" value="AAA+_ATPase"/>
</dbReference>
<dbReference type="InterPro" id="IPR055190">
    <property type="entry name" value="ATP-synt_VA_C"/>
</dbReference>
<dbReference type="InterPro" id="IPR005722">
    <property type="entry name" value="ATP_synth_F1_bsu"/>
</dbReference>
<dbReference type="InterPro" id="IPR020003">
    <property type="entry name" value="ATPase_a/bsu_AS"/>
</dbReference>
<dbReference type="InterPro" id="IPR050053">
    <property type="entry name" value="ATPase_alpha/beta_chains"/>
</dbReference>
<dbReference type="InterPro" id="IPR004100">
    <property type="entry name" value="ATPase_F1/V1/A1_a/bsu_N"/>
</dbReference>
<dbReference type="InterPro" id="IPR036121">
    <property type="entry name" value="ATPase_F1/V1/A1_a/bsu_N_sf"/>
</dbReference>
<dbReference type="InterPro" id="IPR000194">
    <property type="entry name" value="ATPase_F1/V1/A1_a/bsu_nucl-bd"/>
</dbReference>
<dbReference type="InterPro" id="IPR024034">
    <property type="entry name" value="ATPase_F1/V1_b/a_C"/>
</dbReference>
<dbReference type="InterPro" id="IPR027417">
    <property type="entry name" value="P-loop_NTPase"/>
</dbReference>
<dbReference type="NCBIfam" id="TIGR01039">
    <property type="entry name" value="atpD"/>
    <property type="match status" value="1"/>
</dbReference>
<dbReference type="PANTHER" id="PTHR15184">
    <property type="entry name" value="ATP SYNTHASE"/>
    <property type="match status" value="1"/>
</dbReference>
<dbReference type="PANTHER" id="PTHR15184:SF71">
    <property type="entry name" value="ATP SYNTHASE SUBUNIT BETA, MITOCHONDRIAL"/>
    <property type="match status" value="1"/>
</dbReference>
<dbReference type="Pfam" id="PF00006">
    <property type="entry name" value="ATP-synt_ab"/>
    <property type="match status" value="1"/>
</dbReference>
<dbReference type="Pfam" id="PF02874">
    <property type="entry name" value="ATP-synt_ab_N"/>
    <property type="match status" value="1"/>
</dbReference>
<dbReference type="Pfam" id="PF22919">
    <property type="entry name" value="ATP-synt_VA_C"/>
    <property type="match status" value="1"/>
</dbReference>
<dbReference type="SMART" id="SM00382">
    <property type="entry name" value="AAA"/>
    <property type="match status" value="1"/>
</dbReference>
<dbReference type="SUPFAM" id="SSF47917">
    <property type="entry name" value="C-terminal domain of alpha and beta subunits of F1 ATP synthase"/>
    <property type="match status" value="1"/>
</dbReference>
<dbReference type="SUPFAM" id="SSF50615">
    <property type="entry name" value="N-terminal domain of alpha and beta subunits of F1 ATP synthase"/>
    <property type="match status" value="1"/>
</dbReference>
<dbReference type="SUPFAM" id="SSF52540">
    <property type="entry name" value="P-loop containing nucleoside triphosphate hydrolases"/>
    <property type="match status" value="1"/>
</dbReference>
<dbReference type="PROSITE" id="PS00152">
    <property type="entry name" value="ATPASE_ALPHA_BETA"/>
    <property type="match status" value="1"/>
</dbReference>
<sequence length="474" mass="51214">MAQETLVDTSIQGKIVQCIGAVVDVEFARNQMPKIYDALKMEGSSLTLEVQQQLGDGIVRTIALGTSDGLRRGNIVYNTGANITVPVGKATLGRIMDVLGAPIDERGPVDQTLTAPIHRKAPAYDELSPSQELLETGIKVIDLVCPFAKGGKVGLFGGAGVGKTVNMMELINNIAKAHSGLSVFAGVGERTREGNDFYHEMADSGVVNLDKLEDSKVAMVYGQMNEPPGNRLRVALTGLTIAESFRDEGRDVLFFVDNIYRYTLAGTEVSALLGRMPSAVGYQPTLAEEMGRLQERITSTKVGSITSIQAVYVPADDLTDPSPATTFAHLDSTVVLSRDIASLGIYPAVDPLDSTSRQLSPAVVGEDHYNTARAVQGTLQRYKELRDIIAILGMDELAPEDKLAVARARKIQRFLSQPFHVAEVFTGSPGKYVSLAETIRGFKMIVAGECDHLPEQAFYMVGTIDEAFEKAKKM</sequence>
<feature type="chain" id="PRO_0000339569" description="ATP synthase subunit beta 1">
    <location>
        <begin position="1"/>
        <end position="474"/>
    </location>
</feature>
<feature type="binding site" evidence="1">
    <location>
        <begin position="157"/>
        <end position="164"/>
    </location>
    <ligand>
        <name>ATP</name>
        <dbReference type="ChEBI" id="CHEBI:30616"/>
    </ligand>
</feature>
<name>ATPB1_POLNA</name>
<accession>A1VIV2</accession>
<proteinExistence type="inferred from homology"/>
<keyword id="KW-0066">ATP synthesis</keyword>
<keyword id="KW-0067">ATP-binding</keyword>
<keyword id="KW-0997">Cell inner membrane</keyword>
<keyword id="KW-1003">Cell membrane</keyword>
<keyword id="KW-0139">CF(1)</keyword>
<keyword id="KW-0375">Hydrogen ion transport</keyword>
<keyword id="KW-0406">Ion transport</keyword>
<keyword id="KW-0472">Membrane</keyword>
<keyword id="KW-0547">Nucleotide-binding</keyword>
<keyword id="KW-1185">Reference proteome</keyword>
<keyword id="KW-1278">Translocase</keyword>
<keyword id="KW-0813">Transport</keyword>
<organism>
    <name type="scientific">Polaromonas naphthalenivorans (strain CJ2)</name>
    <dbReference type="NCBI Taxonomy" id="365044"/>
    <lineage>
        <taxon>Bacteria</taxon>
        <taxon>Pseudomonadati</taxon>
        <taxon>Pseudomonadota</taxon>
        <taxon>Betaproteobacteria</taxon>
        <taxon>Burkholderiales</taxon>
        <taxon>Comamonadaceae</taxon>
        <taxon>Polaromonas</taxon>
    </lineage>
</organism>
<gene>
    <name evidence="1" type="primary">atpD1</name>
    <name type="ordered locus">Pnap_0255</name>
</gene>
<evidence type="ECO:0000255" key="1">
    <source>
        <dbReference type="HAMAP-Rule" id="MF_01347"/>
    </source>
</evidence>